<accession>Q957D1</accession>
<sequence>MTNIRKSHPLLKIINNSFIDLPTPSSISSWWNFGSLLGICLTIQILTGLFLAMHYTSDTMTAFSSVTHICRDVNYGWMLRYLHANGASMFFICLYLHIGRGLYYGSYMYKETWNIGVILLFAVMATAFMGYVLPWGQMSFWGATVITNLLSAIPYIGTDLVQWIWGGFSVDKATLTRFFAFHFLLPFIIVALVMIHLLFLHETGSNNPTGIPSNMDMIPFHPYHTIKDTLGLLIMITVLLALVLFTPDLLGDPDNYMPANPFNTPPHIKPEWYFLFAYAILRSIPNKLGGVLALAMSILVLLAIPFLHTSNQRSMMFRPISQCLFWLLVANLLTLTWIGGQPVEHPYIIIGQVASVXYFLIIIVLMPLICLVDKYLLKW</sequence>
<comment type="function">
    <text evidence="2">Component of the ubiquinol-cytochrome c reductase complex (complex III or cytochrome b-c1 complex) that is part of the mitochondrial respiratory chain. The b-c1 complex mediates electron transfer from ubiquinol to cytochrome c. Contributes to the generation of a proton gradient across the mitochondrial membrane that is then used for ATP synthesis.</text>
</comment>
<comment type="cofactor">
    <cofactor evidence="2">
        <name>heme b</name>
        <dbReference type="ChEBI" id="CHEBI:60344"/>
    </cofactor>
    <text evidence="2">Binds 2 heme b groups non-covalently.</text>
</comment>
<comment type="subunit">
    <text evidence="2">The cytochrome bc1 complex contains 11 subunits: 3 respiratory subunits (MT-CYB, CYC1 and UQCRFS1), 2 core proteins (UQCRC1 and UQCRC2) and 6 low-molecular weight proteins (UQCRH/QCR6, UQCRB/QCR7, UQCRQ/QCR8, UQCR10/QCR9, UQCR11/QCR10 and a cleavage product of UQCRFS1). This cytochrome bc1 complex then forms a dimer.</text>
</comment>
<comment type="subcellular location">
    <subcellularLocation>
        <location evidence="2">Mitochondrion inner membrane</location>
        <topology evidence="2">Multi-pass membrane protein</topology>
    </subcellularLocation>
</comment>
<comment type="miscellaneous">
    <text evidence="1">Heme 1 (or BL or b562) is low-potential and absorbs at about 562 nm, and heme 2 (or BH or b566) is high-potential and absorbs at about 566 nm.</text>
</comment>
<comment type="similarity">
    <text evidence="3 4">Belongs to the cytochrome b family.</text>
</comment>
<comment type="caution">
    <text evidence="2">The full-length protein contains only eight transmembrane helices, not nine as predicted by bioinformatics tools.</text>
</comment>
<proteinExistence type="inferred from homology"/>
<evidence type="ECO:0000250" key="1"/>
<evidence type="ECO:0000250" key="2">
    <source>
        <dbReference type="UniProtKB" id="P00157"/>
    </source>
</evidence>
<evidence type="ECO:0000255" key="3">
    <source>
        <dbReference type="PROSITE-ProRule" id="PRU00967"/>
    </source>
</evidence>
<evidence type="ECO:0000255" key="4">
    <source>
        <dbReference type="PROSITE-ProRule" id="PRU00968"/>
    </source>
</evidence>
<name>CYB_SCOHE</name>
<feature type="chain" id="PRO_0000254756" description="Cytochrome b">
    <location>
        <begin position="1"/>
        <end position="379"/>
    </location>
</feature>
<feature type="transmembrane region" description="Helical" evidence="2">
    <location>
        <begin position="33"/>
        <end position="53"/>
    </location>
</feature>
<feature type="transmembrane region" description="Helical" evidence="2">
    <location>
        <begin position="77"/>
        <end position="98"/>
    </location>
</feature>
<feature type="transmembrane region" description="Helical" evidence="2">
    <location>
        <begin position="113"/>
        <end position="133"/>
    </location>
</feature>
<feature type="transmembrane region" description="Helical" evidence="2">
    <location>
        <begin position="178"/>
        <end position="198"/>
    </location>
</feature>
<feature type="transmembrane region" description="Helical" evidence="2">
    <location>
        <begin position="226"/>
        <end position="246"/>
    </location>
</feature>
<feature type="transmembrane region" description="Helical" evidence="2">
    <location>
        <begin position="288"/>
        <end position="308"/>
    </location>
</feature>
<feature type="transmembrane region" description="Helical" evidence="2">
    <location>
        <begin position="320"/>
        <end position="340"/>
    </location>
</feature>
<feature type="transmembrane region" description="Helical" evidence="2">
    <location>
        <begin position="347"/>
        <end position="367"/>
    </location>
</feature>
<feature type="binding site" description="axial binding residue" evidence="2">
    <location>
        <position position="83"/>
    </location>
    <ligand>
        <name>heme b</name>
        <dbReference type="ChEBI" id="CHEBI:60344"/>
        <label>b562</label>
    </ligand>
    <ligandPart>
        <name>Fe</name>
        <dbReference type="ChEBI" id="CHEBI:18248"/>
    </ligandPart>
</feature>
<feature type="binding site" description="axial binding residue" evidence="2">
    <location>
        <position position="97"/>
    </location>
    <ligand>
        <name>heme b</name>
        <dbReference type="ChEBI" id="CHEBI:60344"/>
        <label>b566</label>
    </ligand>
    <ligandPart>
        <name>Fe</name>
        <dbReference type="ChEBI" id="CHEBI:18248"/>
    </ligandPart>
</feature>
<feature type="binding site" description="axial binding residue" evidence="2">
    <location>
        <position position="182"/>
    </location>
    <ligand>
        <name>heme b</name>
        <dbReference type="ChEBI" id="CHEBI:60344"/>
        <label>b562</label>
    </ligand>
    <ligandPart>
        <name>Fe</name>
        <dbReference type="ChEBI" id="CHEBI:18248"/>
    </ligandPart>
</feature>
<feature type="binding site" description="axial binding residue" evidence="2">
    <location>
        <position position="196"/>
    </location>
    <ligand>
        <name>heme b</name>
        <dbReference type="ChEBI" id="CHEBI:60344"/>
        <label>b566</label>
    </ligand>
    <ligandPart>
        <name>Fe</name>
        <dbReference type="ChEBI" id="CHEBI:18248"/>
    </ligandPart>
</feature>
<feature type="binding site" evidence="2">
    <location>
        <position position="201"/>
    </location>
    <ligand>
        <name>a ubiquinone</name>
        <dbReference type="ChEBI" id="CHEBI:16389"/>
    </ligand>
</feature>
<protein>
    <recommendedName>
        <fullName>Cytochrome b</fullName>
    </recommendedName>
    <alternativeName>
        <fullName>Complex III subunit 3</fullName>
    </alternativeName>
    <alternativeName>
        <fullName>Complex III subunit III</fullName>
    </alternativeName>
    <alternativeName>
        <fullName>Cytochrome b-c1 complex subunit 3</fullName>
    </alternativeName>
    <alternativeName>
        <fullName>Ubiquinol-cytochrome-c reductase complex cytochrome b subunit</fullName>
    </alternativeName>
</protein>
<dbReference type="EMBL" id="AF376831">
    <property type="protein sequence ID" value="AAK57650.1"/>
    <property type="molecule type" value="Genomic_DNA"/>
</dbReference>
<dbReference type="GO" id="GO:0005743">
    <property type="term" value="C:mitochondrial inner membrane"/>
    <property type="evidence" value="ECO:0007669"/>
    <property type="project" value="UniProtKB-SubCell"/>
</dbReference>
<dbReference type="GO" id="GO:0045275">
    <property type="term" value="C:respiratory chain complex III"/>
    <property type="evidence" value="ECO:0007669"/>
    <property type="project" value="InterPro"/>
</dbReference>
<dbReference type="GO" id="GO:0046872">
    <property type="term" value="F:metal ion binding"/>
    <property type="evidence" value="ECO:0007669"/>
    <property type="project" value="UniProtKB-KW"/>
</dbReference>
<dbReference type="GO" id="GO:0008121">
    <property type="term" value="F:ubiquinol-cytochrome-c reductase activity"/>
    <property type="evidence" value="ECO:0007669"/>
    <property type="project" value="InterPro"/>
</dbReference>
<dbReference type="GO" id="GO:0006122">
    <property type="term" value="P:mitochondrial electron transport, ubiquinol to cytochrome c"/>
    <property type="evidence" value="ECO:0007669"/>
    <property type="project" value="TreeGrafter"/>
</dbReference>
<dbReference type="CDD" id="cd00290">
    <property type="entry name" value="cytochrome_b_C"/>
    <property type="match status" value="1"/>
</dbReference>
<dbReference type="CDD" id="cd00284">
    <property type="entry name" value="Cytochrome_b_N"/>
    <property type="match status" value="1"/>
</dbReference>
<dbReference type="FunFam" id="1.20.810.10:FF:000002">
    <property type="entry name" value="Cytochrome b"/>
    <property type="match status" value="1"/>
</dbReference>
<dbReference type="Gene3D" id="1.20.810.10">
    <property type="entry name" value="Cytochrome Bc1 Complex, Chain C"/>
    <property type="match status" value="1"/>
</dbReference>
<dbReference type="InterPro" id="IPR005798">
    <property type="entry name" value="Cyt_b/b6_C"/>
</dbReference>
<dbReference type="InterPro" id="IPR036150">
    <property type="entry name" value="Cyt_b/b6_C_sf"/>
</dbReference>
<dbReference type="InterPro" id="IPR005797">
    <property type="entry name" value="Cyt_b/b6_N"/>
</dbReference>
<dbReference type="InterPro" id="IPR027387">
    <property type="entry name" value="Cytb/b6-like_sf"/>
</dbReference>
<dbReference type="InterPro" id="IPR030689">
    <property type="entry name" value="Cytochrome_b"/>
</dbReference>
<dbReference type="InterPro" id="IPR048260">
    <property type="entry name" value="Cytochrome_b_C_euk/bac"/>
</dbReference>
<dbReference type="InterPro" id="IPR048259">
    <property type="entry name" value="Cytochrome_b_N_euk/bac"/>
</dbReference>
<dbReference type="InterPro" id="IPR016174">
    <property type="entry name" value="Di-haem_cyt_TM"/>
</dbReference>
<dbReference type="PANTHER" id="PTHR19271">
    <property type="entry name" value="CYTOCHROME B"/>
    <property type="match status" value="1"/>
</dbReference>
<dbReference type="PANTHER" id="PTHR19271:SF16">
    <property type="entry name" value="CYTOCHROME B"/>
    <property type="match status" value="1"/>
</dbReference>
<dbReference type="Pfam" id="PF00032">
    <property type="entry name" value="Cytochrom_B_C"/>
    <property type="match status" value="1"/>
</dbReference>
<dbReference type="Pfam" id="PF00033">
    <property type="entry name" value="Cytochrome_B"/>
    <property type="match status" value="1"/>
</dbReference>
<dbReference type="PIRSF" id="PIRSF038885">
    <property type="entry name" value="COB"/>
    <property type="match status" value="1"/>
</dbReference>
<dbReference type="SUPFAM" id="SSF81648">
    <property type="entry name" value="a domain/subunit of cytochrome bc1 complex (Ubiquinol-cytochrome c reductase)"/>
    <property type="match status" value="1"/>
</dbReference>
<dbReference type="SUPFAM" id="SSF81342">
    <property type="entry name" value="Transmembrane di-heme cytochromes"/>
    <property type="match status" value="1"/>
</dbReference>
<dbReference type="PROSITE" id="PS51003">
    <property type="entry name" value="CYTB_CTER"/>
    <property type="match status" value="1"/>
</dbReference>
<dbReference type="PROSITE" id="PS51002">
    <property type="entry name" value="CYTB_NTER"/>
    <property type="match status" value="1"/>
</dbReference>
<organism>
    <name type="scientific">Scotophilus heathii</name>
    <name type="common">Greater Asiatic yellow bat</name>
    <dbReference type="NCBI Taxonomy" id="159339"/>
    <lineage>
        <taxon>Eukaryota</taxon>
        <taxon>Metazoa</taxon>
        <taxon>Chordata</taxon>
        <taxon>Craniata</taxon>
        <taxon>Vertebrata</taxon>
        <taxon>Euteleostomi</taxon>
        <taxon>Mammalia</taxon>
        <taxon>Eutheria</taxon>
        <taxon>Laurasiatheria</taxon>
        <taxon>Chiroptera</taxon>
        <taxon>Yangochiroptera</taxon>
        <taxon>Vespertilionidae</taxon>
        <taxon>Scotophilus</taxon>
    </lineage>
</organism>
<gene>
    <name type="primary">MT-CYB</name>
    <name type="synonym">COB</name>
    <name type="synonym">CYTB</name>
    <name type="synonym">MTCYB</name>
</gene>
<reference key="1">
    <citation type="journal article" date="2001" name="Mol. Phylogenet. Evol.">
        <title>Molecular systematics of bats of the genus Myotis (Vespertilionidae) suggests deterministic ecomorphological convergences.</title>
        <authorList>
            <person name="Ruedi M."/>
            <person name="Mayer F."/>
        </authorList>
    </citation>
    <scope>NUCLEOTIDE SEQUENCE [GENOMIC DNA]</scope>
    <source>
        <strain>Isolate MVZ 176513</strain>
    </source>
</reference>
<geneLocation type="mitochondrion"/>
<keyword id="KW-0249">Electron transport</keyword>
<keyword id="KW-0349">Heme</keyword>
<keyword id="KW-0408">Iron</keyword>
<keyword id="KW-0472">Membrane</keyword>
<keyword id="KW-0479">Metal-binding</keyword>
<keyword id="KW-0496">Mitochondrion</keyword>
<keyword id="KW-0999">Mitochondrion inner membrane</keyword>
<keyword id="KW-0679">Respiratory chain</keyword>
<keyword id="KW-0812">Transmembrane</keyword>
<keyword id="KW-1133">Transmembrane helix</keyword>
<keyword id="KW-0813">Transport</keyword>
<keyword id="KW-0830">Ubiquinone</keyword>